<reference key="1">
    <citation type="journal article" date="2010" name="J. Bacteriol.">
        <title>The genetic basis of laboratory adaptation in Caulobacter crescentus.</title>
        <authorList>
            <person name="Marks M.E."/>
            <person name="Castro-Rojas C.M."/>
            <person name="Teiling C."/>
            <person name="Du L."/>
            <person name="Kapatral V."/>
            <person name="Walunas T.L."/>
            <person name="Crosson S."/>
        </authorList>
    </citation>
    <scope>NUCLEOTIDE SEQUENCE [LARGE SCALE GENOMIC DNA]</scope>
    <source>
        <strain>NA1000 / CB15N</strain>
    </source>
</reference>
<reference key="2">
    <citation type="journal article" date="2002" name="Proc. Natl. Acad. Sci. U.S.A.">
        <title>Identification of a localization factor for the polar positioning of bacterial structural and regulatory proteins.</title>
        <authorList>
            <person name="Viollier P.H."/>
            <person name="Sternheim N."/>
            <person name="Shapiro L."/>
        </authorList>
    </citation>
    <scope>FUNCTION</scope>
</reference>
<proteinExistence type="evidence at transcript level"/>
<accession>B8GXA0</accession>
<dbReference type="EMBL" id="CP001340">
    <property type="protein sequence ID" value="ACL95590.1"/>
    <property type="molecule type" value="Genomic_DNA"/>
</dbReference>
<dbReference type="RefSeq" id="WP_012640394.1">
    <property type="nucleotide sequence ID" value="NC_011916.1"/>
</dbReference>
<dbReference type="RefSeq" id="YP_002517498.1">
    <property type="nucleotide sequence ID" value="NC_011916.1"/>
</dbReference>
<dbReference type="SMR" id="B8GXA0"/>
<dbReference type="GeneID" id="7330431"/>
<dbReference type="KEGG" id="ccs:CCNA_02125"/>
<dbReference type="PATRIC" id="fig|565050.3.peg.2082"/>
<dbReference type="HOGENOM" id="CLU_300301_0_0_5"/>
<dbReference type="OrthoDB" id="5295703at2"/>
<dbReference type="Proteomes" id="UP000001364">
    <property type="component" value="Chromosome"/>
</dbReference>
<dbReference type="GO" id="GO:0016020">
    <property type="term" value="C:membrane"/>
    <property type="evidence" value="ECO:0007669"/>
    <property type="project" value="UniProtKB-SubCell"/>
</dbReference>
<dbReference type="GO" id="GO:0030154">
    <property type="term" value="P:cell differentiation"/>
    <property type="evidence" value="ECO:0007669"/>
    <property type="project" value="UniProtKB-KW"/>
</dbReference>
<dbReference type="GO" id="GO:0051301">
    <property type="term" value="P:cell division"/>
    <property type="evidence" value="ECO:0007669"/>
    <property type="project" value="UniProtKB-KW"/>
</dbReference>
<dbReference type="Gene3D" id="1.10.101.10">
    <property type="entry name" value="PGBD-like superfamily/PGBD"/>
    <property type="match status" value="1"/>
</dbReference>
<dbReference type="Gene3D" id="1.25.40.10">
    <property type="entry name" value="Tetratricopeptide repeat domain"/>
    <property type="match status" value="1"/>
</dbReference>
<dbReference type="InterPro" id="IPR002477">
    <property type="entry name" value="Peptidoglycan-bd-like"/>
</dbReference>
<dbReference type="InterPro" id="IPR036365">
    <property type="entry name" value="PGBD-like_sf"/>
</dbReference>
<dbReference type="InterPro" id="IPR036366">
    <property type="entry name" value="PGBDSf"/>
</dbReference>
<dbReference type="InterPro" id="IPR006597">
    <property type="entry name" value="Sel1-like"/>
</dbReference>
<dbReference type="InterPro" id="IPR050767">
    <property type="entry name" value="Sel1_AlgK"/>
</dbReference>
<dbReference type="InterPro" id="IPR011990">
    <property type="entry name" value="TPR-like_helical_dom_sf"/>
</dbReference>
<dbReference type="PANTHER" id="PTHR11102:SF160">
    <property type="entry name" value="ERAD-ASSOCIATED E3 UBIQUITIN-PROTEIN LIGASE COMPONENT HRD3"/>
    <property type="match status" value="1"/>
</dbReference>
<dbReference type="PANTHER" id="PTHR11102">
    <property type="entry name" value="SEL-1-LIKE PROTEIN"/>
    <property type="match status" value="1"/>
</dbReference>
<dbReference type="Pfam" id="PF01471">
    <property type="entry name" value="PG_binding_1"/>
    <property type="match status" value="1"/>
</dbReference>
<dbReference type="Pfam" id="PF08238">
    <property type="entry name" value="Sel1"/>
    <property type="match status" value="3"/>
</dbReference>
<dbReference type="SMART" id="SM00671">
    <property type="entry name" value="SEL1"/>
    <property type="match status" value="3"/>
</dbReference>
<dbReference type="SUPFAM" id="SSF81901">
    <property type="entry name" value="HCP-like"/>
    <property type="match status" value="1"/>
</dbReference>
<dbReference type="SUPFAM" id="SSF47090">
    <property type="entry name" value="PGBD-like"/>
    <property type="match status" value="1"/>
</dbReference>
<evidence type="ECO:0000255" key="1"/>
<evidence type="ECO:0000256" key="2">
    <source>
        <dbReference type="SAM" id="MobiDB-lite"/>
    </source>
</evidence>
<evidence type="ECO:0000269" key="3">
    <source>
    </source>
</evidence>
<organism>
    <name type="scientific">Caulobacter vibrioides (strain NA1000 / CB15N)</name>
    <name type="common">Caulobacter crescentus</name>
    <dbReference type="NCBI Taxonomy" id="565050"/>
    <lineage>
        <taxon>Bacteria</taxon>
        <taxon>Pseudomonadati</taxon>
        <taxon>Pseudomonadota</taxon>
        <taxon>Alphaproteobacteria</taxon>
        <taxon>Caulobacterales</taxon>
        <taxon>Caulobacteraceae</taxon>
        <taxon>Caulobacter</taxon>
    </lineage>
</organism>
<name>PODJ_CAUVN</name>
<comment type="function">
    <text evidence="3">PodJL provides the positional information for the localization of several polar organelles (pili, adhesive holdfast and chemotactic apparatus) by recruiting structural (CpaE) and regulatory (PleC) proteins to a specific cell pole.</text>
</comment>
<comment type="subcellular location">
    <subcellularLocation>
        <location>Membrane</location>
        <topology>Single-pass membrane protein</topology>
    </subcellularLocation>
    <text>Both PodJL and PodJS localize to the swarmer pole at different stages of the cell division.</text>
</comment>
<comment type="developmental stage">
    <text>PodJS, from the previous progeny, accumulates in the swarmer cell, and is partially degraded during the swarmer-to-stalked transition by sequential proteolytic cleavages (MmpA). PodJL, from the new progeny, is synthesized in the early predivisional cell, and then is likely to be converted to PodJS by proteolytic cleavage of periplasmic domain. After cell division, PodJL disappears, while the level of PodJS increases in the swarmer cell progeny.</text>
</comment>
<comment type="PTM">
    <text>Two isoforms exist, the full-length translation product PodJL and a C-terminal truncated form PodJS. Both appear during a specific time period of the cell cycle to control different aspects of polar organelle development.</text>
</comment>
<comment type="miscellaneous">
    <text>PodJS must be degraded to preserve the asymmetry of the next cell cycle.</text>
</comment>
<sequence length="974" mass="103491">MTAASPWSVKGIDPKAREVAKDLARRSGMTLGEWLNRMIIEGDGQTADPRLAGDDVPNRAYLEIVKDDAPPRIEIAEHPADEVGRVALALDRLTQRIEAAEGRNAAAITGIDHSVRDALTRLGASEREQIAVAARFEGAVDELKTEQARATERLRRIESEAAGPRSAEALRALEGALGKVAGHLYEGEARTREAIATLEAKLNQQSSGDPSALVEAVVARLGERLEAAETRTSDALRELGASFQALDQRLGAVETANPATGVQEGLDSLAATLTQKMEAARLEMAAKLRESADGRFDRMERKLGEMAAHVQAAEQRSAQAIERMGREIVGVADAFNRRVHAAESRNASAIEQVGGEVARIAASVEHKLNRADSVQAQALEKLGGEIARITEKLAERIGSAERRNALAIDDVGEQVARVTERLNQRHERSSQELVDRIRQSEERTLRMLEEAREKIDSRLSEAQRKLEAAPPSPPPAQAPAPVATAQRPVPPAASPFEDNYFSQAASFSTSEDEADAFDAPPAPARSFEVAEFPAAEPEEPAFAHDDYAIADGFEPESPRYEVEPEVSDFAPAEPSRPMSTRDIIEQARAAARAAAASEGKGGKAKSAKKEKASKASGSLFSGFGGFSTKKSKARLGATVTTALVVFAAAGALGAGVGGLLLLNTDDGNNSPSRVAQAIAGRKADVEVNGPEADTTPGAPRAAVALTTGKVVPAEVEAPAAPPTNEAKALFEDAVRKIESGDRSGVELLKRAANGGYPAAQFYLSKMYEGGKNGVKVDMAEARRWSERAANGGDPRAMHNLALYYFKGEGGPRNSTTAASWFRKAADMGLVDSQFNLAQLYESGLGVSQNPAEAYKWYVIAGRAGDSTARGRATALRSQLTAEAQQTADRSALAFRPQTQVQTASLSSAAPAAANANLGVAQRVLSQLGYYQGPRDGVSSPALRMAIAAYQRDQGLPPTGSVDAETLNRLSVYAR</sequence>
<protein>
    <recommendedName>
        <fullName>Localization factor PodJL</fullName>
    </recommendedName>
    <alternativeName>
        <fullName>Polar organelle development protein</fullName>
    </alternativeName>
    <component>
        <recommendedName>
            <fullName>Localization factor PodJS</fullName>
        </recommendedName>
    </component>
</protein>
<keyword id="KW-0131">Cell cycle</keyword>
<keyword id="KW-0132">Cell division</keyword>
<keyword id="KW-0175">Coiled coil</keyword>
<keyword id="KW-0221">Differentiation</keyword>
<keyword id="KW-0472">Membrane</keyword>
<keyword id="KW-1185">Reference proteome</keyword>
<keyword id="KW-0677">Repeat</keyword>
<keyword id="KW-0812">Transmembrane</keyword>
<keyword id="KW-1133">Transmembrane helix</keyword>
<feature type="chain" id="PRO_0000378600" description="Localization factor PodJL">
    <location>
        <begin position="1"/>
        <end position="974"/>
    </location>
</feature>
<feature type="chain" id="PRO_0000378601" description="Localization factor PodJS">
    <location>
        <begin position="1"/>
        <end status="unknown"/>
    </location>
</feature>
<feature type="transmembrane region" description="Helical" evidence="1">
    <location>
        <begin position="642"/>
        <end position="662"/>
    </location>
</feature>
<feature type="repeat" description="Sel1-like 1">
    <location>
        <begin position="757"/>
        <end position="793"/>
    </location>
</feature>
<feature type="repeat" description="Sel1-like 2">
    <location>
        <begin position="794"/>
        <end position="829"/>
    </location>
</feature>
<feature type="repeat" description="Sel1-like 3">
    <location>
        <begin position="830"/>
        <end position="865"/>
    </location>
</feature>
<feature type="region of interest" description="Disordered" evidence="2">
    <location>
        <begin position="460"/>
        <end position="497"/>
    </location>
</feature>
<feature type="region of interest" description="Disordered" evidence="2">
    <location>
        <begin position="589"/>
        <end position="611"/>
    </location>
</feature>
<feature type="coiled-coil region" evidence="1">
    <location>
        <begin position="81"/>
        <end position="163"/>
    </location>
</feature>
<feature type="coiled-coil region" evidence="1">
    <location>
        <begin position="218"/>
        <end position="320"/>
    </location>
</feature>
<feature type="coiled-coil region" evidence="1">
    <location>
        <begin position="375"/>
        <end position="469"/>
    </location>
</feature>
<feature type="compositionally biased region" description="Low complexity" evidence="2">
    <location>
        <begin position="589"/>
        <end position="598"/>
    </location>
</feature>
<gene>
    <name type="primary">podJ</name>
    <name type="ordered locus">CCNA_02125</name>
</gene>